<protein>
    <recommendedName>
        <fullName>Uncharacterized protein C129R</fullName>
        <shortName>pC129R</shortName>
        <ecNumber evidence="1">3.1.4.-</ecNumber>
    </recommendedName>
</protein>
<name>VF129_ASFWA</name>
<organismHost>
    <name type="scientific">Ornithodoros</name>
    <name type="common">relapsing fever ticks</name>
    <dbReference type="NCBI Taxonomy" id="6937"/>
</organismHost>
<organismHost>
    <name type="scientific">Phacochoerus aethiopicus</name>
    <name type="common">Warthog</name>
    <dbReference type="NCBI Taxonomy" id="85517"/>
</organismHost>
<organismHost>
    <name type="scientific">Phacochoerus africanus</name>
    <name type="common">Warthog</name>
    <dbReference type="NCBI Taxonomy" id="41426"/>
</organismHost>
<organismHost>
    <name type="scientific">Potamochoerus larvatus</name>
    <name type="common">Bushpig</name>
    <dbReference type="NCBI Taxonomy" id="273792"/>
</organismHost>
<organismHost>
    <name type="scientific">Sus scrofa</name>
    <name type="common">Pig</name>
    <dbReference type="NCBI Taxonomy" id="9823"/>
</organismHost>
<comment type="function">
    <text evidence="1">Plays a role in the inhibition of type I interferon signaling pathway. Mechanistically, specifically interacts with 2',3'-cGAMP and cleaves it via its phosphodiesterase activity. In turn, prevents 2',3'-cGAMP interaction with host ER-resident STING1 leading to inhibition of downstream signaling pathway and type I interferon production.</text>
</comment>
<comment type="subcellular location">
    <subcellularLocation>
        <location evidence="1">Virion</location>
    </subcellularLocation>
</comment>
<comment type="similarity">
    <text evidence="2">Belongs to the asfivirus C129R family.</text>
</comment>
<gene>
    <name type="ordered locus">War-072</name>
</gene>
<keyword id="KW-0945">Host-virus interaction</keyword>
<keyword id="KW-0378">Hydrolase</keyword>
<keyword id="KW-1090">Inhibition of host innate immune response by virus</keyword>
<keyword id="KW-1114">Inhibition of host interferon signaling pathway by virus</keyword>
<keyword id="KW-0922">Interferon antiviral system evasion</keyword>
<keyword id="KW-0899">Viral immunoevasion</keyword>
<keyword id="KW-0946">Virion</keyword>
<sequence>MEHPSTNYTLEQQHEKLKNYVLIPKHLWSYIKYGTHVRYYTKQNVFRVGGFVLQNPYEAVVKNEVKTAIRLQNSFNTKAKGHVTWAVSYDDISKLYAKPDAIMLTIQENVEKALHALNQNVLTLASKIR</sequence>
<proteinExistence type="inferred from homology"/>
<organism>
    <name type="scientific">African swine fever virus (isolate Warthog/Namibia/Wart80/1980)</name>
    <name type="common">ASFV</name>
    <dbReference type="NCBI Taxonomy" id="561444"/>
    <lineage>
        <taxon>Viruses</taxon>
        <taxon>Varidnaviria</taxon>
        <taxon>Bamfordvirae</taxon>
        <taxon>Nucleocytoviricota</taxon>
        <taxon>Pokkesviricetes</taxon>
        <taxon>Asfuvirales</taxon>
        <taxon>Asfarviridae</taxon>
        <taxon>Asfivirus</taxon>
        <taxon>African swine fever virus</taxon>
    </lineage>
</organism>
<accession>P0CA39</accession>
<evidence type="ECO:0000250" key="1">
    <source>
        <dbReference type="UniProtKB" id="Q65154"/>
    </source>
</evidence>
<evidence type="ECO:0000305" key="2"/>
<feature type="chain" id="PRO_0000373509" description="Uncharacterized protein C129R">
    <location>
        <begin position="1"/>
        <end position="129"/>
    </location>
</feature>
<dbReference type="EC" id="3.1.4.-" evidence="1"/>
<dbReference type="EMBL" id="AY261366">
    <property type="status" value="NOT_ANNOTATED_CDS"/>
    <property type="molecule type" value="Genomic_DNA"/>
</dbReference>
<dbReference type="Proteomes" id="UP000000858">
    <property type="component" value="Segment"/>
</dbReference>
<dbReference type="GO" id="GO:0044423">
    <property type="term" value="C:virion component"/>
    <property type="evidence" value="ECO:0007669"/>
    <property type="project" value="UniProtKB-KW"/>
</dbReference>
<dbReference type="GO" id="GO:0016787">
    <property type="term" value="F:hydrolase activity"/>
    <property type="evidence" value="ECO:0007669"/>
    <property type="project" value="UniProtKB-KW"/>
</dbReference>
<dbReference type="GO" id="GO:0052170">
    <property type="term" value="P:symbiont-mediated suppression of host innate immune response"/>
    <property type="evidence" value="ECO:0007669"/>
    <property type="project" value="UniProtKB-KW"/>
</dbReference>
<dbReference type="GO" id="GO:0039502">
    <property type="term" value="P:symbiont-mediated suppression of host type I interferon-mediated signaling pathway"/>
    <property type="evidence" value="ECO:0007669"/>
    <property type="project" value="UniProtKB-KW"/>
</dbReference>
<reference key="1">
    <citation type="submission" date="2003-03" db="EMBL/GenBank/DDBJ databases">
        <title>African swine fever virus genomes.</title>
        <authorList>
            <person name="Kutish G.F."/>
            <person name="Rock D.L."/>
        </authorList>
    </citation>
    <scope>NUCLEOTIDE SEQUENCE [LARGE SCALE GENOMIC DNA]</scope>
</reference>